<evidence type="ECO:0000250" key="1">
    <source>
        <dbReference type="UniProtKB" id="O60306"/>
    </source>
</evidence>
<evidence type="ECO:0000256" key="2">
    <source>
        <dbReference type="SAM" id="MobiDB-lite"/>
    </source>
</evidence>
<evidence type="ECO:0000269" key="3">
    <source>
    </source>
</evidence>
<evidence type="ECO:0000305" key="4"/>
<gene>
    <name type="primary">Aqr</name>
    <name type="synonym">Kiaa0560</name>
</gene>
<keyword id="KW-0007">Acetylation</keyword>
<keyword id="KW-0067">ATP-binding</keyword>
<keyword id="KW-0347">Helicase</keyword>
<keyword id="KW-0378">Hydrolase</keyword>
<keyword id="KW-0507">mRNA processing</keyword>
<keyword id="KW-0508">mRNA splicing</keyword>
<keyword id="KW-0547">Nucleotide-binding</keyword>
<keyword id="KW-0539">Nucleus</keyword>
<keyword id="KW-1185">Reference proteome</keyword>
<keyword id="KW-0694">RNA-binding</keyword>
<keyword id="KW-0747">Spliceosome</keyword>
<comment type="function">
    <text evidence="1">Involved in pre-mRNA splicing as component of the spliceosome. Intron-binding spliceosomal protein required to link pre-mRNA splicing and snoRNP (small nucleolar ribonucleoprotein) biogenesis. Plays a key role in position-dependent assembly of intron-encoded box C/D small snoRNP, splicing being required for snoRNP assembly. May act by helping the folding of the snoRNA sequence. Binds to intron of pre-mRNAs in a sequence-independent manner, contacting the region between snoRNA and the branchpoint of introns (40 nucleotides upstream of the branchpoint) during the late stages of splicing. Has ATP-dependent RNA helicase activity and can unwind double-stranded RNA molecules with a 3' overhang (in vitro).</text>
</comment>
<comment type="catalytic activity">
    <reaction evidence="1">
        <text>ATP + H2O = ADP + phosphate + H(+)</text>
        <dbReference type="Rhea" id="RHEA:13065"/>
        <dbReference type="ChEBI" id="CHEBI:15377"/>
        <dbReference type="ChEBI" id="CHEBI:15378"/>
        <dbReference type="ChEBI" id="CHEBI:30616"/>
        <dbReference type="ChEBI" id="CHEBI:43474"/>
        <dbReference type="ChEBI" id="CHEBI:456216"/>
        <dbReference type="EC" id="3.6.4.13"/>
    </reaction>
</comment>
<comment type="subunit">
    <text evidence="1">Identified in the spliceosome C complex. Component of the XAB2 complex, a multimeric protein complex composed of XAB2, PRPF19, AQR, ZNF830, ISY1, and PPIE. Identified in a pentameric intron-binding (IB) complex composed of AQR, XAB2, ISY1, ZNF830 and PPIE that is incorporated into the spliceosome as a preassembled complex. The IB complex does not contain PRPF19. Within the spliceosome, interacts with SNRPA1, SF3B1, SF3B3, SF3A1 and SF3A2.</text>
</comment>
<comment type="subcellular location">
    <subcellularLocation>
        <location evidence="1">Nucleus</location>
    </subcellularLocation>
    <subcellularLocation>
        <location evidence="1">Nucleus</location>
        <location evidence="1">Nucleoplasm</location>
    </subcellularLocation>
    <text evidence="1">Localizes to speckle-like regions of the nucleoplasm.</text>
</comment>
<comment type="developmental stage">
    <text evidence="3">First detected at 8.5 dpc, when neural crest cells are visible at the lateral ridges of the neural plate. During embryogenesis, it is expressed in mesoderm, in the neural crest (and its target tissues) and in neuroepithelium.</text>
</comment>
<comment type="induction">
    <text evidence="3">By retinoic acid (RA).</text>
</comment>
<comment type="domain">
    <text evidence="1">Contains an N-terminal domain with structural similarity to ARM repeat regions; this domain functions as a scaffold for protein-protein interactions, but is not required for RNA binding or for ATP-dependent RNA helicase activity.</text>
</comment>
<comment type="similarity">
    <text evidence="4">Belongs to the CWF11 family.</text>
</comment>
<comment type="sequence caution" evidence="4">
    <conflict type="frameshift">
        <sequence resource="EMBL-CDS" id="AAB50008"/>
    </conflict>
</comment>
<comment type="sequence caution" evidence="4">
    <conflict type="erroneous initiation">
        <sequence resource="EMBL-CDS" id="BAC65592"/>
    </conflict>
    <text>Extended N-terminus.</text>
</comment>
<organism>
    <name type="scientific">Mus musculus</name>
    <name type="common">Mouse</name>
    <dbReference type="NCBI Taxonomy" id="10090"/>
    <lineage>
        <taxon>Eukaryota</taxon>
        <taxon>Metazoa</taxon>
        <taxon>Chordata</taxon>
        <taxon>Craniata</taxon>
        <taxon>Vertebrata</taxon>
        <taxon>Euteleostomi</taxon>
        <taxon>Mammalia</taxon>
        <taxon>Eutheria</taxon>
        <taxon>Euarchontoglires</taxon>
        <taxon>Glires</taxon>
        <taxon>Rodentia</taxon>
        <taxon>Myomorpha</taxon>
        <taxon>Muroidea</taxon>
        <taxon>Muridae</taxon>
        <taxon>Murinae</taxon>
        <taxon>Mus</taxon>
        <taxon>Mus</taxon>
    </lineage>
</organism>
<proteinExistence type="evidence at protein level"/>
<sequence>MAAPAQPKKIVAPTVSQINAEFVTQLACKYWAPHIKKKSPFDIKVIEEIYEKEIVKSRFAIRKIMLLEFSQYLENYLWMNYSPEVSSKAYLMSICCMVNEKFRENVPAWETFKKKPDHFPFFFKCILKAALAETDGEFSLHEQTLLLLFLDHCFNSLEVDLIRSQVQQLISLPMWMGLQPARLELELKKTPKLRKFWNLIKKNDEKMDPEAREQAYQERRFLSRLIQKFISVLKSIPLSEPVTMDKVHYCERFIELMIDLEALLPTRRWFNTILDDSHLLVHCYLSSLVHREEDGHLFSQLLDMLKFYTGFEINDQTGNALTENEMTTIHYDRITSLQRAAFAHFPELYDFALSNVAEVDARDSLVKFFGPLSSNTLHQVASYLCLLPTLPKNEDTTFDKEFLLELLVSRHERRISQIQQLNQMPLYPTEKIIWDENIVPTEYYSGEGCLALPKLNLQFLTLHDYLLRNFNLFRLESTYEIRQDIEDSVSRMKPWQSEYGGVVFGGWARMAQPIVAFTVVEVAKPNIGENWPTRVRADVTINLNVRDHIKDEWEGLRKHDVCFLITVRPTKPYGTKFDRRRPFIEQVGLVYVRGCEIQGMLDDKGRVIEDGPEPRPNLRGESRTFRVFLDPNQYQQDMTNTIQNGAEDVYDTFNVIMRRKPKENNFKAVLETIRNLMNTDCVVPDWLHDIILGYGDPSSAHYSKMPNQIATLDFNDTFLSIEHLKASFPGHNVKVTVSDPALQIPPFRITFPVRSGKGKKRKDADGEEDDTEEAKTLIVEPHVIPNRGPYPYNQPKRNTIQFTHTQIEAIRAGMQPGLTMVVGPPGTGKTDVAVQIISNIYHNFPEQRTLIVTHSNQALNQLFEKIMALDIDERHLLRLGHGEEELETEKDFSRYGRVNYVLARRIELLEEVKRLQKSLGVPGDASYTCETAGYFFLYQVMSRWEEYMSRVKNSGTACPDAAPDAAQVATFFPFHEYFANAPQPIFKGRSYEEDMEIAEGCFRHIKKIFTQLEEFRASELLRSGLDRSKYLLVKEAKIIAMTCTHAALKRHDLVKLGFKYDNILMEEAAQILEIETFIPLLLQNPQDGFSRLKRWIMIGDHHQLPPVIKNMAFQKYSNMEQSLFTRFVRVGVPTVDLDAQGRARASLCNLYNWRYKNLGNLPHVQLLPEFSTANAGLLYDFQLINVEDFQGVGESEPNPYFYQNLGEAEYVVALFMYMCLLGYPADKISILTTYNGQKHLIRDIINRRCGNNPLIGRPNKVTTVDRFQGQQNDYILLSLVRTRAVGHLRDVRRLVVAMSRARLGLYIFARVSLFQNCFELTPAFSQLTARPLHLHIIPTEPFPTSRKNGERPPHEVQVIKNMPQMANFVYNMYMHLIQTTHHYHQTFLQLPPAMVEEGEEGQSQETEMEAEEETVSAQGNLTPSPADASLSQETPAAQPDCSSQTEDTSAPCDIATAAEPVSAAAEAATPQDAESVPTETE</sequence>
<dbReference type="EC" id="3.6.4.13" evidence="1"/>
<dbReference type="EMBL" id="AK122310">
    <property type="protein sequence ID" value="BAC65592.1"/>
    <property type="status" value="ALT_INIT"/>
    <property type="molecule type" value="mRNA"/>
</dbReference>
<dbReference type="EMBL" id="AK145547">
    <property type="protein sequence ID" value="BAE26500.1"/>
    <property type="molecule type" value="mRNA"/>
</dbReference>
<dbReference type="EMBL" id="AK151716">
    <property type="protein sequence ID" value="BAE30635.1"/>
    <property type="molecule type" value="mRNA"/>
</dbReference>
<dbReference type="EMBL" id="BC042479">
    <property type="protein sequence ID" value="AAH42479.1"/>
    <property type="molecule type" value="mRNA"/>
</dbReference>
<dbReference type="EMBL" id="U90333">
    <property type="protein sequence ID" value="AAB50008.1"/>
    <property type="status" value="ALT_SEQ"/>
    <property type="molecule type" value="mRNA"/>
</dbReference>
<dbReference type="CCDS" id="CCDS16565.1"/>
<dbReference type="RefSeq" id="NP_001277717.1">
    <property type="nucleotide sequence ID" value="NM_001290788.1"/>
</dbReference>
<dbReference type="RefSeq" id="NP_033832.2">
    <property type="nucleotide sequence ID" value="NM_009702.4"/>
</dbReference>
<dbReference type="SMR" id="Q8CFQ3"/>
<dbReference type="BioGRID" id="198178">
    <property type="interactions" value="1"/>
</dbReference>
<dbReference type="FunCoup" id="Q8CFQ3">
    <property type="interactions" value="4608"/>
</dbReference>
<dbReference type="IntAct" id="Q8CFQ3">
    <property type="interactions" value="1"/>
</dbReference>
<dbReference type="STRING" id="10090.ENSMUSP00000047157"/>
<dbReference type="iPTMnet" id="Q8CFQ3"/>
<dbReference type="PhosphoSitePlus" id="Q8CFQ3"/>
<dbReference type="SwissPalm" id="Q8CFQ3"/>
<dbReference type="PaxDb" id="10090-ENSMUSP00000047157"/>
<dbReference type="ProteomicsDB" id="296275"/>
<dbReference type="Pumba" id="Q8CFQ3"/>
<dbReference type="Antibodypedia" id="53026">
    <property type="antibodies" value="96 antibodies from 20 providers"/>
</dbReference>
<dbReference type="DNASU" id="11834"/>
<dbReference type="Ensembl" id="ENSMUST00000043160.13">
    <property type="protein sequence ID" value="ENSMUSP00000047157.7"/>
    <property type="gene ID" value="ENSMUSG00000040383.17"/>
</dbReference>
<dbReference type="GeneID" id="11834"/>
<dbReference type="KEGG" id="mmu:11834"/>
<dbReference type="UCSC" id="uc008lqd.4">
    <property type="organism name" value="mouse"/>
</dbReference>
<dbReference type="AGR" id="MGI:1276102"/>
<dbReference type="CTD" id="9716"/>
<dbReference type="MGI" id="MGI:1276102">
    <property type="gene designation" value="Aqr"/>
</dbReference>
<dbReference type="VEuPathDB" id="HostDB:ENSMUSG00000040383"/>
<dbReference type="eggNOG" id="KOG1806">
    <property type="taxonomic scope" value="Eukaryota"/>
</dbReference>
<dbReference type="GeneTree" id="ENSGT00940000156668"/>
<dbReference type="InParanoid" id="Q8CFQ3"/>
<dbReference type="OMA" id="YRVWLDC"/>
<dbReference type="OrthoDB" id="1879at2759"/>
<dbReference type="PhylomeDB" id="Q8CFQ3"/>
<dbReference type="TreeFam" id="TF105711"/>
<dbReference type="Reactome" id="R-MMU-6781823">
    <property type="pathway name" value="Formation of TC-NER Pre-Incision Complex"/>
</dbReference>
<dbReference type="Reactome" id="R-MMU-6782135">
    <property type="pathway name" value="Dual incision in TC-NER"/>
</dbReference>
<dbReference type="Reactome" id="R-MMU-6782210">
    <property type="pathway name" value="Gap-filling DNA repair synthesis and ligation in TC-NER"/>
</dbReference>
<dbReference type="Reactome" id="R-MMU-72163">
    <property type="pathway name" value="mRNA Splicing - Major Pathway"/>
</dbReference>
<dbReference type="BioGRID-ORCS" id="11834">
    <property type="hits" value="29 hits in 77 CRISPR screens"/>
</dbReference>
<dbReference type="ChiTaRS" id="Aqr">
    <property type="organism name" value="mouse"/>
</dbReference>
<dbReference type="PRO" id="PR:Q8CFQ3"/>
<dbReference type="Proteomes" id="UP000000589">
    <property type="component" value="Chromosome 2"/>
</dbReference>
<dbReference type="RNAct" id="Q8CFQ3">
    <property type="molecule type" value="protein"/>
</dbReference>
<dbReference type="Bgee" id="ENSMUSG00000040383">
    <property type="expression patterns" value="Expressed in mandibular prominence and 257 other cell types or tissues"/>
</dbReference>
<dbReference type="ExpressionAtlas" id="Q8CFQ3">
    <property type="expression patterns" value="baseline and differential"/>
</dbReference>
<dbReference type="GO" id="GO:0005654">
    <property type="term" value="C:nucleoplasm"/>
    <property type="evidence" value="ECO:0007669"/>
    <property type="project" value="UniProtKB-SubCell"/>
</dbReference>
<dbReference type="GO" id="GO:0071007">
    <property type="term" value="C:U2-type catalytic step 2 spliceosome"/>
    <property type="evidence" value="ECO:0007669"/>
    <property type="project" value="Ensembl"/>
</dbReference>
<dbReference type="GO" id="GO:0034458">
    <property type="term" value="F:3'-5' RNA helicase activity"/>
    <property type="evidence" value="ECO:0007669"/>
    <property type="project" value="Ensembl"/>
</dbReference>
<dbReference type="GO" id="GO:0005524">
    <property type="term" value="F:ATP binding"/>
    <property type="evidence" value="ECO:0007669"/>
    <property type="project" value="UniProtKB-KW"/>
</dbReference>
<dbReference type="GO" id="GO:0016887">
    <property type="term" value="F:ATP hydrolysis activity"/>
    <property type="evidence" value="ECO:0007669"/>
    <property type="project" value="RHEA"/>
</dbReference>
<dbReference type="GO" id="GO:0003727">
    <property type="term" value="F:single-stranded RNA binding"/>
    <property type="evidence" value="ECO:0007669"/>
    <property type="project" value="Ensembl"/>
</dbReference>
<dbReference type="GO" id="GO:0000398">
    <property type="term" value="P:mRNA splicing, via spliceosome"/>
    <property type="evidence" value="ECO:0007669"/>
    <property type="project" value="Ensembl"/>
</dbReference>
<dbReference type="CDD" id="cd17935">
    <property type="entry name" value="EEXXQc_AQR"/>
    <property type="match status" value="1"/>
</dbReference>
<dbReference type="CDD" id="cd18808">
    <property type="entry name" value="SF1_C_Upf1"/>
    <property type="match status" value="1"/>
</dbReference>
<dbReference type="FunFam" id="3.40.50.300:FF:000396">
    <property type="entry name" value="RNA helicase aquarius"/>
    <property type="match status" value="1"/>
</dbReference>
<dbReference type="Gene3D" id="3.40.50.300">
    <property type="entry name" value="P-loop containing nucleotide triphosphate hydrolases"/>
    <property type="match status" value="2"/>
</dbReference>
<dbReference type="InterPro" id="IPR048966">
    <property type="entry name" value="Aquarius_b-barrel"/>
</dbReference>
<dbReference type="InterPro" id="IPR048967">
    <property type="entry name" value="Aquarius_insert"/>
</dbReference>
<dbReference type="InterPro" id="IPR032174">
    <property type="entry name" value="Aquarius_N"/>
</dbReference>
<dbReference type="InterPro" id="IPR026300">
    <property type="entry name" value="CWF11_fam"/>
</dbReference>
<dbReference type="InterPro" id="IPR045055">
    <property type="entry name" value="DNA2/NAM7-like"/>
</dbReference>
<dbReference type="InterPro" id="IPR041679">
    <property type="entry name" value="DNA2/NAM7-like_C"/>
</dbReference>
<dbReference type="InterPro" id="IPR041677">
    <property type="entry name" value="DNA2/NAM7_AAA_11"/>
</dbReference>
<dbReference type="InterPro" id="IPR027417">
    <property type="entry name" value="P-loop_NTPase"/>
</dbReference>
<dbReference type="InterPro" id="IPR047187">
    <property type="entry name" value="SF1_C_Upf1"/>
</dbReference>
<dbReference type="PANTHER" id="PTHR10887">
    <property type="entry name" value="DNA2/NAM7 HELICASE FAMILY"/>
    <property type="match status" value="1"/>
</dbReference>
<dbReference type="PANTHER" id="PTHR10887:SF5">
    <property type="entry name" value="RNA HELICASE AQUARIUS"/>
    <property type="match status" value="1"/>
</dbReference>
<dbReference type="Pfam" id="PF13086">
    <property type="entry name" value="AAA_11"/>
    <property type="match status" value="1"/>
</dbReference>
<dbReference type="Pfam" id="PF13087">
    <property type="entry name" value="AAA_12"/>
    <property type="match status" value="1"/>
</dbReference>
<dbReference type="Pfam" id="PF16399">
    <property type="entry name" value="Aquarius_N_1st"/>
    <property type="match status" value="1"/>
</dbReference>
<dbReference type="Pfam" id="PF21143">
    <property type="entry name" value="Aquarius_N_2nd"/>
    <property type="match status" value="1"/>
</dbReference>
<dbReference type="Pfam" id="PF21144">
    <property type="entry name" value="Aquarius_N_3rd"/>
    <property type="match status" value="1"/>
</dbReference>
<dbReference type="PIRSF" id="PIRSF038901">
    <property type="entry name" value="AQR_cwf11"/>
    <property type="match status" value="1"/>
</dbReference>
<dbReference type="SUPFAM" id="SSF52540">
    <property type="entry name" value="P-loop containing nucleoside triphosphate hydrolases"/>
    <property type="match status" value="1"/>
</dbReference>
<accession>Q8CFQ3</accession>
<accession>P97871</accession>
<accession>Q3U9N1</accession>
<accession>Q3ULE8</accession>
<accession>Q80TX8</accession>
<feature type="chain" id="PRO_0000252390" description="RNA helicase aquarius">
    <location>
        <begin position="1"/>
        <end position="1481"/>
    </location>
</feature>
<feature type="region of interest" description="Helical region with structural similarity to ARM repeat domains" evidence="1">
    <location>
        <begin position="1"/>
        <end position="416"/>
    </location>
</feature>
<feature type="region of interest" description="Required for assembly of the IB complex" evidence="1">
    <location>
        <begin position="417"/>
        <end position="1481"/>
    </location>
</feature>
<feature type="region of interest" description="Disordered" evidence="2">
    <location>
        <begin position="754"/>
        <end position="773"/>
    </location>
</feature>
<feature type="region of interest" description="Disordered" evidence="2">
    <location>
        <begin position="1396"/>
        <end position="1481"/>
    </location>
</feature>
<feature type="compositionally biased region" description="Acidic residues" evidence="2">
    <location>
        <begin position="1396"/>
        <end position="1414"/>
    </location>
</feature>
<feature type="compositionally biased region" description="Polar residues" evidence="2">
    <location>
        <begin position="1418"/>
        <end position="1448"/>
    </location>
</feature>
<feature type="compositionally biased region" description="Low complexity" evidence="2">
    <location>
        <begin position="1455"/>
        <end position="1468"/>
    </location>
</feature>
<feature type="binding site" evidence="1">
    <location>
        <position position="801"/>
    </location>
    <ligand>
        <name>ATP</name>
        <dbReference type="ChEBI" id="CHEBI:30616"/>
    </ligand>
</feature>
<feature type="binding site" evidence="1">
    <location>
        <position position="806"/>
    </location>
    <ligand>
        <name>ATP</name>
        <dbReference type="ChEBI" id="CHEBI:30616"/>
    </ligand>
</feature>
<feature type="binding site" evidence="1">
    <location>
        <begin position="826"/>
        <end position="831"/>
    </location>
    <ligand>
        <name>ATP</name>
        <dbReference type="ChEBI" id="CHEBI:30616"/>
    </ligand>
</feature>
<feature type="modified residue" description="N6-acetyllysine" evidence="1">
    <location>
        <position position="1055"/>
    </location>
</feature>
<feature type="sequence conflict" description="In Ref. 3; AAH42479." evidence="4" ref="3">
    <original>F</original>
    <variation>L</variation>
    <location>
        <position position="112"/>
    </location>
</feature>
<feature type="sequence conflict" description="In Ref. 3; AAH42479." evidence="4" ref="3">
    <original>H</original>
    <variation>Y</variation>
    <location>
        <position position="875"/>
    </location>
</feature>
<protein>
    <recommendedName>
        <fullName>RNA helicase aquarius</fullName>
        <ecNumber evidence="1">3.6.4.13</ecNumber>
    </recommendedName>
    <alternativeName>
        <fullName evidence="1">Intron-binding protein of 160 kDa</fullName>
    </alternativeName>
</protein>
<reference key="1">
    <citation type="journal article" date="2003" name="DNA Res.">
        <title>Prediction of the coding sequences of mouse homologues of KIAA gene: II. The complete nucleotide sequences of 400 mouse KIAA-homologous cDNAs identified by screening of terminal sequences of cDNA clones randomly sampled from size-fractionated libraries.</title>
        <authorList>
            <person name="Okazaki N."/>
            <person name="Kikuno R."/>
            <person name="Ohara R."/>
            <person name="Inamoto S."/>
            <person name="Aizawa H."/>
            <person name="Yuasa S."/>
            <person name="Nakajima D."/>
            <person name="Nagase T."/>
            <person name="Ohara O."/>
            <person name="Koga H."/>
        </authorList>
    </citation>
    <scope>NUCLEOTIDE SEQUENCE [LARGE SCALE MRNA]</scope>
    <source>
        <tissue>Brain</tissue>
    </source>
</reference>
<reference key="2">
    <citation type="journal article" date="2005" name="Science">
        <title>The transcriptional landscape of the mammalian genome.</title>
        <authorList>
            <person name="Carninci P."/>
            <person name="Kasukawa T."/>
            <person name="Katayama S."/>
            <person name="Gough J."/>
            <person name="Frith M.C."/>
            <person name="Maeda N."/>
            <person name="Oyama R."/>
            <person name="Ravasi T."/>
            <person name="Lenhard B."/>
            <person name="Wells C."/>
            <person name="Kodzius R."/>
            <person name="Shimokawa K."/>
            <person name="Bajic V.B."/>
            <person name="Brenner S.E."/>
            <person name="Batalov S."/>
            <person name="Forrest A.R."/>
            <person name="Zavolan M."/>
            <person name="Davis M.J."/>
            <person name="Wilming L.G."/>
            <person name="Aidinis V."/>
            <person name="Allen J.E."/>
            <person name="Ambesi-Impiombato A."/>
            <person name="Apweiler R."/>
            <person name="Aturaliya R.N."/>
            <person name="Bailey T.L."/>
            <person name="Bansal M."/>
            <person name="Baxter L."/>
            <person name="Beisel K.W."/>
            <person name="Bersano T."/>
            <person name="Bono H."/>
            <person name="Chalk A.M."/>
            <person name="Chiu K.P."/>
            <person name="Choudhary V."/>
            <person name="Christoffels A."/>
            <person name="Clutterbuck D.R."/>
            <person name="Crowe M.L."/>
            <person name="Dalla E."/>
            <person name="Dalrymple B.P."/>
            <person name="de Bono B."/>
            <person name="Della Gatta G."/>
            <person name="di Bernardo D."/>
            <person name="Down T."/>
            <person name="Engstrom P."/>
            <person name="Fagiolini M."/>
            <person name="Faulkner G."/>
            <person name="Fletcher C.F."/>
            <person name="Fukushima T."/>
            <person name="Furuno M."/>
            <person name="Futaki S."/>
            <person name="Gariboldi M."/>
            <person name="Georgii-Hemming P."/>
            <person name="Gingeras T.R."/>
            <person name="Gojobori T."/>
            <person name="Green R.E."/>
            <person name="Gustincich S."/>
            <person name="Harbers M."/>
            <person name="Hayashi Y."/>
            <person name="Hensch T.K."/>
            <person name="Hirokawa N."/>
            <person name="Hill D."/>
            <person name="Huminiecki L."/>
            <person name="Iacono M."/>
            <person name="Ikeo K."/>
            <person name="Iwama A."/>
            <person name="Ishikawa T."/>
            <person name="Jakt M."/>
            <person name="Kanapin A."/>
            <person name="Katoh M."/>
            <person name="Kawasawa Y."/>
            <person name="Kelso J."/>
            <person name="Kitamura H."/>
            <person name="Kitano H."/>
            <person name="Kollias G."/>
            <person name="Krishnan S.P."/>
            <person name="Kruger A."/>
            <person name="Kummerfeld S.K."/>
            <person name="Kurochkin I.V."/>
            <person name="Lareau L.F."/>
            <person name="Lazarevic D."/>
            <person name="Lipovich L."/>
            <person name="Liu J."/>
            <person name="Liuni S."/>
            <person name="McWilliam S."/>
            <person name="Madan Babu M."/>
            <person name="Madera M."/>
            <person name="Marchionni L."/>
            <person name="Matsuda H."/>
            <person name="Matsuzawa S."/>
            <person name="Miki H."/>
            <person name="Mignone F."/>
            <person name="Miyake S."/>
            <person name="Morris K."/>
            <person name="Mottagui-Tabar S."/>
            <person name="Mulder N."/>
            <person name="Nakano N."/>
            <person name="Nakauchi H."/>
            <person name="Ng P."/>
            <person name="Nilsson R."/>
            <person name="Nishiguchi S."/>
            <person name="Nishikawa S."/>
            <person name="Nori F."/>
            <person name="Ohara O."/>
            <person name="Okazaki Y."/>
            <person name="Orlando V."/>
            <person name="Pang K.C."/>
            <person name="Pavan W.J."/>
            <person name="Pavesi G."/>
            <person name="Pesole G."/>
            <person name="Petrovsky N."/>
            <person name="Piazza S."/>
            <person name="Reed J."/>
            <person name="Reid J.F."/>
            <person name="Ring B.Z."/>
            <person name="Ringwald M."/>
            <person name="Rost B."/>
            <person name="Ruan Y."/>
            <person name="Salzberg S.L."/>
            <person name="Sandelin A."/>
            <person name="Schneider C."/>
            <person name="Schoenbach C."/>
            <person name="Sekiguchi K."/>
            <person name="Semple C.A."/>
            <person name="Seno S."/>
            <person name="Sessa L."/>
            <person name="Sheng Y."/>
            <person name="Shibata Y."/>
            <person name="Shimada H."/>
            <person name="Shimada K."/>
            <person name="Silva D."/>
            <person name="Sinclair B."/>
            <person name="Sperling S."/>
            <person name="Stupka E."/>
            <person name="Sugiura K."/>
            <person name="Sultana R."/>
            <person name="Takenaka Y."/>
            <person name="Taki K."/>
            <person name="Tammoja K."/>
            <person name="Tan S.L."/>
            <person name="Tang S."/>
            <person name="Taylor M.S."/>
            <person name="Tegner J."/>
            <person name="Teichmann S.A."/>
            <person name="Ueda H.R."/>
            <person name="van Nimwegen E."/>
            <person name="Verardo R."/>
            <person name="Wei C.L."/>
            <person name="Yagi K."/>
            <person name="Yamanishi H."/>
            <person name="Zabarovsky E."/>
            <person name="Zhu S."/>
            <person name="Zimmer A."/>
            <person name="Hide W."/>
            <person name="Bult C."/>
            <person name="Grimmond S.M."/>
            <person name="Teasdale R.D."/>
            <person name="Liu E.T."/>
            <person name="Brusic V."/>
            <person name="Quackenbush J."/>
            <person name="Wahlestedt C."/>
            <person name="Mattick J.S."/>
            <person name="Hume D.A."/>
            <person name="Kai C."/>
            <person name="Sasaki D."/>
            <person name="Tomaru Y."/>
            <person name="Fukuda S."/>
            <person name="Kanamori-Katayama M."/>
            <person name="Suzuki M."/>
            <person name="Aoki J."/>
            <person name="Arakawa T."/>
            <person name="Iida J."/>
            <person name="Imamura K."/>
            <person name="Itoh M."/>
            <person name="Kato T."/>
            <person name="Kawaji H."/>
            <person name="Kawagashira N."/>
            <person name="Kawashima T."/>
            <person name="Kojima M."/>
            <person name="Kondo S."/>
            <person name="Konno H."/>
            <person name="Nakano K."/>
            <person name="Ninomiya N."/>
            <person name="Nishio T."/>
            <person name="Okada M."/>
            <person name="Plessy C."/>
            <person name="Shibata K."/>
            <person name="Shiraki T."/>
            <person name="Suzuki S."/>
            <person name="Tagami M."/>
            <person name="Waki K."/>
            <person name="Watahiki A."/>
            <person name="Okamura-Oho Y."/>
            <person name="Suzuki H."/>
            <person name="Kawai J."/>
            <person name="Hayashizaki Y."/>
        </authorList>
    </citation>
    <scope>NUCLEOTIDE SEQUENCE [LARGE SCALE MRNA]</scope>
    <source>
        <strain>C57BL/6J</strain>
        <tissue>Bone marrow</tissue>
    </source>
</reference>
<reference key="3">
    <citation type="journal article" date="2004" name="Genome Res.">
        <title>The status, quality, and expansion of the NIH full-length cDNA project: the Mammalian Gene Collection (MGC).</title>
        <authorList>
            <consortium name="The MGC Project Team"/>
        </authorList>
    </citation>
    <scope>NUCLEOTIDE SEQUENCE [LARGE SCALE MRNA]</scope>
    <source>
        <tissue>Eye</tissue>
    </source>
</reference>
<reference key="4">
    <citation type="journal article" date="1998" name="Dev. Dyn.">
        <title>Aquarius, a novel gene isolated by gene trapping with an RNA-dependent RNA polymerase motif.</title>
        <authorList>
            <person name="Sam M."/>
            <person name="Wurst W."/>
            <person name="Klueppel M."/>
            <person name="Jin O."/>
            <person name="Heng H."/>
            <person name="Bernstein A."/>
        </authorList>
    </citation>
    <scope>NUCLEOTIDE SEQUENCE [MRNA] OF 35-794</scope>
    <scope>DEVELOPMENTAL STAGE</scope>
    <scope>INDUCTION</scope>
</reference>
<reference key="5">
    <citation type="journal article" date="2010" name="Cell">
        <title>A tissue-specific atlas of mouse protein phosphorylation and expression.</title>
        <authorList>
            <person name="Huttlin E.L."/>
            <person name="Jedrychowski M.P."/>
            <person name="Elias J.E."/>
            <person name="Goswami T."/>
            <person name="Rad R."/>
            <person name="Beausoleil S.A."/>
            <person name="Villen J."/>
            <person name="Haas W."/>
            <person name="Sowa M.E."/>
            <person name="Gygi S.P."/>
        </authorList>
    </citation>
    <scope>IDENTIFICATION BY MASS SPECTROMETRY [LARGE SCALE ANALYSIS]</scope>
    <source>
        <tissue>Kidney</tissue>
        <tissue>Lung</tissue>
        <tissue>Pancreas</tissue>
        <tissue>Spleen</tissue>
        <tissue>Testis</tissue>
    </source>
</reference>
<name>AQR_MOUSE</name>